<gene>
    <name type="primary">MAP4K5</name>
</gene>
<evidence type="ECO:0000250" key="1">
    <source>
        <dbReference type="UniProtKB" id="Q8BPM2"/>
    </source>
</evidence>
<evidence type="ECO:0000255" key="2">
    <source>
        <dbReference type="PROSITE-ProRule" id="PRU00159"/>
    </source>
</evidence>
<evidence type="ECO:0000255" key="3">
    <source>
        <dbReference type="PROSITE-ProRule" id="PRU00795"/>
    </source>
</evidence>
<evidence type="ECO:0000256" key="4">
    <source>
        <dbReference type="SAM" id="MobiDB-lite"/>
    </source>
</evidence>
<evidence type="ECO:0000269" key="5">
    <source>
    </source>
</evidence>
<evidence type="ECO:0000269" key="6">
    <source>
    </source>
</evidence>
<evidence type="ECO:0000269" key="7">
    <source>
    </source>
</evidence>
<evidence type="ECO:0000305" key="8"/>
<evidence type="ECO:0000312" key="9">
    <source>
        <dbReference type="EMBL" id="AAB48435.1"/>
    </source>
</evidence>
<evidence type="ECO:0007744" key="10">
    <source>
    </source>
</evidence>
<name>M4K5_HUMAN</name>
<sequence length="846" mass="95054">MEAPLRPAADILRRNPQQDYELVQRVGSGTYGDVYKARNVHTGELAAVKIIKLEPGDDFSLIQQEIFMVKECKHCNIVAYFGSYLSREKLWICMEYCGGGSLQDIYHVTGPLSELQIAYVCRETLQGLAYLHTKGKMHRDIKGANILLTDHGDVKLADFGVAAKITATIAKRKSFIGTPYWMAPEVAAVEKNGGYNQLCDIWAVGITAIELGELQPPMFDLHPMRALFLMSKSNFQPPKLKDKTKWSSTFHNFVKIALTKNPKKRPTAERLLTHTFVAQPGLSRALAVELLDKVNNPDNHAHYTEADDDDFEPHAIIRHTIRSTNRNARAERTASEINFDKLQFEPPLRKETEARDEMGLSSDPNFMLQWNPFVDGANTGKSTSKRAIPPPLPPKPRISSYPEDNFPDEEKASTIKHCPDSESRAPQILRRQSSPSCGPVAETSSIGNGDGISKLMSENTEGSAQAPQLPRKKDKRDFPKPAINGLPPTPKVLMGACFSKVFDGCPLKINCATSWIHPDTKDQYIIFGTEDGIYTLNLNELHEATMEQLFPRKCTWLYVINNTLMSLSEGKTFQLYSHNLIALFEHAKKPGLAAHIQTHRFPDRILPRKFALTTKIPDTKGCHKCCIVRNPYTGHKYLCGALQSGIVLLQWYEPMQKFMLIKHFDFPLPSPLNVFEMLVIPEQEYPMVCVAISKGTESNQVVQFETINLNSASSWFTEIGAGSQQLDSIHVTQLERDTVLVCLDKFVKIVNLQGKLKSSKKLASELSFDFRIESVVCLQDSVLAFWKHGMQGKSFKSDEVTQEISDETRVFRLLGSDRVVVLESRPTENPTAHSNLYILAGHENSY</sequence>
<organism evidence="9">
    <name type="scientific">Homo sapiens</name>
    <name type="common">Human</name>
    <dbReference type="NCBI Taxonomy" id="9606"/>
    <lineage>
        <taxon>Eukaryota</taxon>
        <taxon>Metazoa</taxon>
        <taxon>Chordata</taxon>
        <taxon>Craniata</taxon>
        <taxon>Vertebrata</taxon>
        <taxon>Euteleostomi</taxon>
        <taxon>Mammalia</taxon>
        <taxon>Eutheria</taxon>
        <taxon>Euarchontoglires</taxon>
        <taxon>Primates</taxon>
        <taxon>Haplorrhini</taxon>
        <taxon>Catarrhini</taxon>
        <taxon>Hominidae</taxon>
        <taxon>Homo</taxon>
    </lineage>
</organism>
<feature type="chain" id="PRO_0000086282" description="Mitogen-activated protein kinase kinase kinase kinase 5">
    <location>
        <begin position="1"/>
        <end position="846"/>
    </location>
</feature>
<feature type="domain" description="Protein kinase" evidence="2">
    <location>
        <begin position="20"/>
        <end position="277"/>
    </location>
</feature>
<feature type="domain" description="CNH" evidence="3">
    <location>
        <begin position="506"/>
        <end position="819"/>
    </location>
</feature>
<feature type="region of interest" description="Disordered" evidence="4">
    <location>
        <begin position="323"/>
        <end position="485"/>
    </location>
</feature>
<feature type="compositionally biased region" description="Basic and acidic residues" evidence="4">
    <location>
        <begin position="328"/>
        <end position="358"/>
    </location>
</feature>
<feature type="compositionally biased region" description="Basic and acidic residues" evidence="4">
    <location>
        <begin position="408"/>
        <end position="423"/>
    </location>
</feature>
<feature type="compositionally biased region" description="Polar residues" evidence="4">
    <location>
        <begin position="430"/>
        <end position="447"/>
    </location>
</feature>
<feature type="compositionally biased region" description="Polar residues" evidence="4">
    <location>
        <begin position="456"/>
        <end position="466"/>
    </location>
</feature>
<feature type="active site" description="Proton acceptor" evidence="2">
    <location>
        <position position="140"/>
    </location>
</feature>
<feature type="binding site" evidence="2">
    <location>
        <begin position="26"/>
        <end position="34"/>
    </location>
    <ligand>
        <name>ATP</name>
        <dbReference type="ChEBI" id="CHEBI:30616"/>
    </ligand>
</feature>
<feature type="binding site" evidence="2 6">
    <location>
        <position position="49"/>
    </location>
    <ligand>
        <name>ATP</name>
        <dbReference type="ChEBI" id="CHEBI:30616"/>
    </ligand>
</feature>
<feature type="modified residue" description="Phosphoserine" evidence="10">
    <location>
        <position position="335"/>
    </location>
</feature>
<feature type="modified residue" description="Phosphoserine" evidence="1">
    <location>
        <position position="433"/>
    </location>
</feature>
<feature type="sequence variant" id="VAR_057102" description="In dbSNP:rs34726242.">
    <original>H</original>
    <variation>Y</variation>
    <location>
        <position position="41"/>
    </location>
</feature>
<feature type="sequence variant" id="VAR_040747" description="In dbSNP:rs12881869." evidence="5">
    <original>A</original>
    <variation>T</variation>
    <location>
        <position position="334"/>
    </location>
</feature>
<feature type="sequence variant" id="VAR_040748" description="In dbSNP:rs34818002." evidence="5">
    <original>P</original>
    <variation>L</variation>
    <location>
        <position position="407"/>
    </location>
</feature>
<feature type="sequence variant" id="VAR_040749" description="In dbSNP:rs55815015." evidence="5">
    <original>I</original>
    <variation>V</variation>
    <location>
        <position position="446"/>
    </location>
</feature>
<feature type="sequence variant" id="VAR_040750" description="In dbSNP:rs35768475." evidence="6">
    <original>K</original>
    <variation>N</variation>
    <location>
        <position position="473"/>
    </location>
</feature>
<feature type="sequence variant" id="VAR_040751" description="In dbSNP:rs55997280." evidence="5">
    <original>R</original>
    <variation>Q</variation>
    <location>
        <position position="552"/>
    </location>
</feature>
<feature type="sequence variant" id="VAR_040752" description="In dbSNP:rs17780143." evidence="5">
    <original>T</original>
    <variation>M</variation>
    <location>
        <position position="633"/>
    </location>
</feature>
<feature type="mutagenesis site" description="Loss of kinase activity and ability to activate JNK family." evidence="6">
    <original>K</original>
    <variation>R</variation>
    <location>
        <position position="49"/>
    </location>
</feature>
<dbReference type="EC" id="2.7.11.1"/>
<dbReference type="EMBL" id="U77129">
    <property type="protein sequence ID" value="AAB48435.1"/>
    <property type="molecule type" value="mRNA"/>
</dbReference>
<dbReference type="EMBL" id="BC036013">
    <property type="protein sequence ID" value="AAH36013.1"/>
    <property type="molecule type" value="mRNA"/>
</dbReference>
<dbReference type="EMBL" id="AL118556">
    <property type="status" value="NOT_ANNOTATED_CDS"/>
    <property type="molecule type" value="Genomic_DNA"/>
</dbReference>
<dbReference type="CCDS" id="CCDS91875.1"/>
<dbReference type="RefSeq" id="NP_006566.2">
    <property type="nucleotide sequence ID" value="NM_006575.4"/>
</dbReference>
<dbReference type="RefSeq" id="NP_942089.1">
    <property type="nucleotide sequence ID" value="NM_198794.4"/>
</dbReference>
<dbReference type="RefSeq" id="XP_006720076.1">
    <property type="nucleotide sequence ID" value="XM_006720013.5"/>
</dbReference>
<dbReference type="SMR" id="Q9Y4K4"/>
<dbReference type="BioGRID" id="116353">
    <property type="interactions" value="101"/>
</dbReference>
<dbReference type="FunCoup" id="Q9Y4K4">
    <property type="interactions" value="3299"/>
</dbReference>
<dbReference type="IntAct" id="Q9Y4K4">
    <property type="interactions" value="29"/>
</dbReference>
<dbReference type="MINT" id="Q9Y4K4"/>
<dbReference type="STRING" id="9606.ENSP00000013125"/>
<dbReference type="BindingDB" id="Q9Y4K4"/>
<dbReference type="ChEMBL" id="CHEMBL4852"/>
<dbReference type="DrugBank" id="DB12010">
    <property type="generic name" value="Fostamatinib"/>
</dbReference>
<dbReference type="DrugCentral" id="Q9Y4K4"/>
<dbReference type="GuidetoPHARMACOLOGY" id="2089"/>
<dbReference type="iPTMnet" id="Q9Y4K4"/>
<dbReference type="MetOSite" id="Q9Y4K4"/>
<dbReference type="PhosphoSitePlus" id="Q9Y4K4"/>
<dbReference type="BioMuta" id="MAP4K5"/>
<dbReference type="DMDM" id="30316147"/>
<dbReference type="CPTAC" id="CPTAC-868"/>
<dbReference type="CPTAC" id="CPTAC-869"/>
<dbReference type="jPOST" id="Q9Y4K4"/>
<dbReference type="MassIVE" id="Q9Y4K4"/>
<dbReference type="PaxDb" id="9606-ENSP00000013125"/>
<dbReference type="PeptideAtlas" id="Q9Y4K4"/>
<dbReference type="ProteomicsDB" id="86226"/>
<dbReference type="Pumba" id="Q9Y4K4"/>
<dbReference type="Antibodypedia" id="23648">
    <property type="antibodies" value="189 antibodies from 26 providers"/>
</dbReference>
<dbReference type="DNASU" id="11183"/>
<dbReference type="Ensembl" id="ENST00000013125.9">
    <property type="protein sequence ID" value="ENSP00000013125.5"/>
    <property type="gene ID" value="ENSG00000012983.12"/>
</dbReference>
<dbReference type="Ensembl" id="ENST00000682126.1">
    <property type="protein sequence ID" value="ENSP00000507200.1"/>
    <property type="gene ID" value="ENSG00000012983.12"/>
</dbReference>
<dbReference type="GeneID" id="11183"/>
<dbReference type="KEGG" id="hsa:11183"/>
<dbReference type="MANE-Select" id="ENST00000682126.1">
    <property type="protein sequence ID" value="ENSP00000507200.1"/>
    <property type="RefSeq nucleotide sequence ID" value="NM_006575.6"/>
    <property type="RefSeq protein sequence ID" value="NP_006566.2"/>
</dbReference>
<dbReference type="AGR" id="HGNC:6867"/>
<dbReference type="CTD" id="11183"/>
<dbReference type="DisGeNET" id="11183"/>
<dbReference type="GeneCards" id="MAP4K5"/>
<dbReference type="HGNC" id="HGNC:6867">
    <property type="gene designation" value="MAP4K5"/>
</dbReference>
<dbReference type="HPA" id="ENSG00000012983">
    <property type="expression patterns" value="Low tissue specificity"/>
</dbReference>
<dbReference type="MIM" id="604923">
    <property type="type" value="gene"/>
</dbReference>
<dbReference type="neXtProt" id="NX_Q9Y4K4"/>
<dbReference type="OpenTargets" id="ENSG00000012983"/>
<dbReference type="PharmGKB" id="PA30613"/>
<dbReference type="VEuPathDB" id="HostDB:ENSG00000012983"/>
<dbReference type="eggNOG" id="KOG0576">
    <property type="taxonomic scope" value="Eukaryota"/>
</dbReference>
<dbReference type="GeneTree" id="ENSGT00940000158072"/>
<dbReference type="InParanoid" id="Q9Y4K4"/>
<dbReference type="OrthoDB" id="8693905at2759"/>
<dbReference type="PAN-GO" id="Q9Y4K4">
    <property type="GO annotations" value="4 GO annotations based on evolutionary models"/>
</dbReference>
<dbReference type="PhylomeDB" id="Q9Y4K4"/>
<dbReference type="TreeFam" id="TF105121"/>
<dbReference type="PathwayCommons" id="Q9Y4K4"/>
<dbReference type="SignaLink" id="Q9Y4K4"/>
<dbReference type="SIGNOR" id="Q9Y4K4"/>
<dbReference type="BioGRID-ORCS" id="11183">
    <property type="hits" value="21 hits in 423 CRISPR screens"/>
</dbReference>
<dbReference type="ChiTaRS" id="MAP4K5">
    <property type="organism name" value="human"/>
</dbReference>
<dbReference type="GeneWiki" id="MAP4K5"/>
<dbReference type="GenomeRNAi" id="11183"/>
<dbReference type="Pharos" id="Q9Y4K4">
    <property type="development level" value="Tchem"/>
</dbReference>
<dbReference type="PRO" id="PR:Q9Y4K4"/>
<dbReference type="Proteomes" id="UP000005640">
    <property type="component" value="Chromosome 14"/>
</dbReference>
<dbReference type="RNAct" id="Q9Y4K4">
    <property type="molecule type" value="protein"/>
</dbReference>
<dbReference type="Bgee" id="ENSG00000012983">
    <property type="expression patterns" value="Expressed in corpus callosum and 200 other cell types or tissues"/>
</dbReference>
<dbReference type="ExpressionAtlas" id="Q9Y4K4">
    <property type="expression patterns" value="baseline and differential"/>
</dbReference>
<dbReference type="GO" id="GO:0005929">
    <property type="term" value="C:cilium"/>
    <property type="evidence" value="ECO:0000314"/>
    <property type="project" value="HPA"/>
</dbReference>
<dbReference type="GO" id="GO:0005737">
    <property type="term" value="C:cytoplasm"/>
    <property type="evidence" value="ECO:0000314"/>
    <property type="project" value="UniProtKB"/>
</dbReference>
<dbReference type="GO" id="GO:0005829">
    <property type="term" value="C:cytosol"/>
    <property type="evidence" value="ECO:0000314"/>
    <property type="project" value="HPA"/>
</dbReference>
<dbReference type="GO" id="GO:0005886">
    <property type="term" value="C:plasma membrane"/>
    <property type="evidence" value="ECO:0000314"/>
    <property type="project" value="HPA"/>
</dbReference>
<dbReference type="GO" id="GO:0005524">
    <property type="term" value="F:ATP binding"/>
    <property type="evidence" value="ECO:0000314"/>
    <property type="project" value="UniProtKB"/>
</dbReference>
<dbReference type="GO" id="GO:0008349">
    <property type="term" value="F:MAP kinase kinase kinase kinase activity"/>
    <property type="evidence" value="ECO:0000318"/>
    <property type="project" value="GO_Central"/>
</dbReference>
<dbReference type="GO" id="GO:0004672">
    <property type="term" value="F:protein kinase activity"/>
    <property type="evidence" value="ECO:0000304"/>
    <property type="project" value="ProtInc"/>
</dbReference>
<dbReference type="GO" id="GO:0106310">
    <property type="term" value="F:protein serine kinase activity"/>
    <property type="evidence" value="ECO:0007669"/>
    <property type="project" value="RHEA"/>
</dbReference>
<dbReference type="GO" id="GO:0004674">
    <property type="term" value="F:protein serine/threonine kinase activity"/>
    <property type="evidence" value="ECO:0000314"/>
    <property type="project" value="UniProtKB"/>
</dbReference>
<dbReference type="GO" id="GO:0035556">
    <property type="term" value="P:intracellular signal transduction"/>
    <property type="evidence" value="ECO:0000314"/>
    <property type="project" value="UniProtKB"/>
</dbReference>
<dbReference type="CDD" id="cd06646">
    <property type="entry name" value="STKc_MAP4K5"/>
    <property type="match status" value="1"/>
</dbReference>
<dbReference type="FunFam" id="1.10.510.10:FF:000031">
    <property type="entry name" value="Mitogen-activated protein kinase kinase kinase kinase"/>
    <property type="match status" value="1"/>
</dbReference>
<dbReference type="Gene3D" id="1.10.510.10">
    <property type="entry name" value="Transferase(Phosphotransferase) domain 1"/>
    <property type="match status" value="1"/>
</dbReference>
<dbReference type="InterPro" id="IPR001180">
    <property type="entry name" value="CNH_dom"/>
</dbReference>
<dbReference type="InterPro" id="IPR011009">
    <property type="entry name" value="Kinase-like_dom_sf"/>
</dbReference>
<dbReference type="InterPro" id="IPR021160">
    <property type="entry name" value="MAPKKKK"/>
</dbReference>
<dbReference type="InterPro" id="IPR000719">
    <property type="entry name" value="Prot_kinase_dom"/>
</dbReference>
<dbReference type="InterPro" id="IPR017441">
    <property type="entry name" value="Protein_kinase_ATP_BS"/>
</dbReference>
<dbReference type="InterPro" id="IPR050629">
    <property type="entry name" value="STE20/SPS1-PAK"/>
</dbReference>
<dbReference type="PANTHER" id="PTHR48012:SF19">
    <property type="entry name" value="MITOGEN-ACTIVATED PROTEIN KINASE KINASE KINASE KINASE 5"/>
    <property type="match status" value="1"/>
</dbReference>
<dbReference type="PANTHER" id="PTHR48012">
    <property type="entry name" value="STERILE20-LIKE KINASE, ISOFORM B-RELATED"/>
    <property type="match status" value="1"/>
</dbReference>
<dbReference type="Pfam" id="PF00780">
    <property type="entry name" value="CNH"/>
    <property type="match status" value="1"/>
</dbReference>
<dbReference type="Pfam" id="PF00069">
    <property type="entry name" value="Pkinase"/>
    <property type="match status" value="1"/>
</dbReference>
<dbReference type="PIRSF" id="PIRSF038172">
    <property type="entry name" value="MAPKKKK"/>
    <property type="match status" value="1"/>
</dbReference>
<dbReference type="SMART" id="SM00036">
    <property type="entry name" value="CNH"/>
    <property type="match status" value="1"/>
</dbReference>
<dbReference type="SMART" id="SM00220">
    <property type="entry name" value="S_TKc"/>
    <property type="match status" value="1"/>
</dbReference>
<dbReference type="SUPFAM" id="SSF56112">
    <property type="entry name" value="Protein kinase-like (PK-like)"/>
    <property type="match status" value="1"/>
</dbReference>
<dbReference type="PROSITE" id="PS50219">
    <property type="entry name" value="CNH"/>
    <property type="match status" value="1"/>
</dbReference>
<dbReference type="PROSITE" id="PS00107">
    <property type="entry name" value="PROTEIN_KINASE_ATP"/>
    <property type="match status" value="1"/>
</dbReference>
<dbReference type="PROSITE" id="PS50011">
    <property type="entry name" value="PROTEIN_KINASE_DOM"/>
    <property type="match status" value="1"/>
</dbReference>
<accession>Q9Y4K4</accession>
<accession>A0A0A0MQR1</accession>
<accession>A0A804HIS2</accession>
<accession>Q8IYF6</accession>
<keyword id="KW-0067">ATP-binding</keyword>
<keyword id="KW-0963">Cytoplasm</keyword>
<keyword id="KW-0418">Kinase</keyword>
<keyword id="KW-0547">Nucleotide-binding</keyword>
<keyword id="KW-0597">Phosphoprotein</keyword>
<keyword id="KW-1267">Proteomics identification</keyword>
<keyword id="KW-1185">Reference proteome</keyword>
<keyword id="KW-0723">Serine/threonine-protein kinase</keyword>
<keyword id="KW-0808">Transferase</keyword>
<reference evidence="8" key="1">
    <citation type="journal article" date="1997" name="Oncogene">
        <title>A novel human SPS1/STE20 homologue, KHS, activates jun N-terminal kinase.</title>
        <authorList>
            <person name="Tung R.M."/>
            <person name="Blenis J."/>
        </authorList>
    </citation>
    <scope>NUCLEOTIDE SEQUENCE [MRNA]</scope>
    <scope>FUNCTION</scope>
    <scope>SUBCELLULAR LOCATION</scope>
    <scope>TISSUE SPECIFICITY</scope>
    <scope>MUTAGENESIS OF LYS-49</scope>
    <scope>VARIANT ASN-473</scope>
    <source>
        <tissue>T-cell</tissue>
    </source>
</reference>
<reference key="2">
    <citation type="journal article" date="2003" name="Nature">
        <title>The DNA sequence and analysis of human chromosome 14.</title>
        <authorList>
            <person name="Heilig R."/>
            <person name="Eckenberg R."/>
            <person name="Petit J.-L."/>
            <person name="Fonknechten N."/>
            <person name="Da Silva C."/>
            <person name="Cattolico L."/>
            <person name="Levy M."/>
            <person name="Barbe V."/>
            <person name="De Berardinis V."/>
            <person name="Ureta-Vidal A."/>
            <person name="Pelletier E."/>
            <person name="Vico V."/>
            <person name="Anthouard V."/>
            <person name="Rowen L."/>
            <person name="Madan A."/>
            <person name="Qin S."/>
            <person name="Sun H."/>
            <person name="Du H."/>
            <person name="Pepin K."/>
            <person name="Artiguenave F."/>
            <person name="Robert C."/>
            <person name="Cruaud C."/>
            <person name="Bruels T."/>
            <person name="Jaillon O."/>
            <person name="Friedlander L."/>
            <person name="Samson G."/>
            <person name="Brottier P."/>
            <person name="Cure S."/>
            <person name="Segurens B."/>
            <person name="Aniere F."/>
            <person name="Samain S."/>
            <person name="Crespeau H."/>
            <person name="Abbasi N."/>
            <person name="Aiach N."/>
            <person name="Boscus D."/>
            <person name="Dickhoff R."/>
            <person name="Dors M."/>
            <person name="Dubois I."/>
            <person name="Friedman C."/>
            <person name="Gouyvenoux M."/>
            <person name="James R."/>
            <person name="Madan A."/>
            <person name="Mairey-Estrada B."/>
            <person name="Mangenot S."/>
            <person name="Martins N."/>
            <person name="Menard M."/>
            <person name="Oztas S."/>
            <person name="Ratcliffe A."/>
            <person name="Shaffer T."/>
            <person name="Trask B."/>
            <person name="Vacherie B."/>
            <person name="Bellemere C."/>
            <person name="Belser C."/>
            <person name="Besnard-Gonnet M."/>
            <person name="Bartol-Mavel D."/>
            <person name="Boutard M."/>
            <person name="Briez-Silla S."/>
            <person name="Combette S."/>
            <person name="Dufosse-Laurent V."/>
            <person name="Ferron C."/>
            <person name="Lechaplais C."/>
            <person name="Louesse C."/>
            <person name="Muselet D."/>
            <person name="Magdelenat G."/>
            <person name="Pateau E."/>
            <person name="Petit E."/>
            <person name="Sirvain-Trukniewicz P."/>
            <person name="Trybou A."/>
            <person name="Vega-Czarny N."/>
            <person name="Bataille E."/>
            <person name="Bluet E."/>
            <person name="Bordelais I."/>
            <person name="Dubois M."/>
            <person name="Dumont C."/>
            <person name="Guerin T."/>
            <person name="Haffray S."/>
            <person name="Hammadi R."/>
            <person name="Muanga J."/>
            <person name="Pellouin V."/>
            <person name="Robert D."/>
            <person name="Wunderle E."/>
            <person name="Gauguet G."/>
            <person name="Roy A."/>
            <person name="Sainte-Marthe L."/>
            <person name="Verdier J."/>
            <person name="Verdier-Discala C."/>
            <person name="Hillier L.W."/>
            <person name="Fulton L."/>
            <person name="McPherson J."/>
            <person name="Matsuda F."/>
            <person name="Wilson R."/>
            <person name="Scarpelli C."/>
            <person name="Gyapay G."/>
            <person name="Wincker P."/>
            <person name="Saurin W."/>
            <person name="Quetier F."/>
            <person name="Waterston R."/>
            <person name="Hood L."/>
            <person name="Weissenbach J."/>
        </authorList>
    </citation>
    <scope>NUCLEOTIDE SEQUENCE [LARGE SCALE GENOMIC DNA]</scope>
</reference>
<reference key="3">
    <citation type="journal article" date="2004" name="Genome Res.">
        <title>The status, quality, and expansion of the NIH full-length cDNA project: the Mammalian Gene Collection (MGC).</title>
        <authorList>
            <consortium name="The MGC Project Team"/>
        </authorList>
    </citation>
    <scope>NUCLEOTIDE SEQUENCE [LARGE SCALE MRNA]</scope>
    <source>
        <tissue>Testis</tissue>
    </source>
</reference>
<reference key="4">
    <citation type="journal article" date="1998" name="Oncogene">
        <title>The germinal center kinase (GCK)-related protein kinases HPK1 and KHS are candidates for highly selective signal transducers of Crk family adapter proteins.</title>
        <authorList>
            <person name="Oehrl W."/>
            <person name="Kardinal C."/>
            <person name="Ruf S."/>
            <person name="Adermann K."/>
            <person name="Groffen J."/>
            <person name="Feng G.-S."/>
            <person name="Blenis J."/>
            <person name="Tan T.-H."/>
            <person name="Feller S.M."/>
        </authorList>
    </citation>
    <scope>INTERACTION WITH CRK AND CRKL</scope>
</reference>
<reference key="5">
    <citation type="journal article" date="2009" name="Science">
        <title>Lysine acetylation targets protein complexes and co-regulates major cellular functions.</title>
        <authorList>
            <person name="Choudhary C."/>
            <person name="Kumar C."/>
            <person name="Gnad F."/>
            <person name="Nielsen M.L."/>
            <person name="Rehman M."/>
            <person name="Walther T.C."/>
            <person name="Olsen J.V."/>
            <person name="Mann M."/>
        </authorList>
    </citation>
    <scope>IDENTIFICATION BY MASS SPECTROMETRY [LARGE SCALE ANALYSIS]</scope>
</reference>
<reference key="6">
    <citation type="journal article" date="2013" name="J. Proteome Res.">
        <title>Toward a comprehensive characterization of a human cancer cell phosphoproteome.</title>
        <authorList>
            <person name="Zhou H."/>
            <person name="Di Palma S."/>
            <person name="Preisinger C."/>
            <person name="Peng M."/>
            <person name="Polat A.N."/>
            <person name="Heck A.J."/>
            <person name="Mohammed S."/>
        </authorList>
    </citation>
    <scope>PHOSPHORYLATION [LARGE SCALE ANALYSIS] AT SER-335</scope>
    <scope>IDENTIFICATION BY MASS SPECTROMETRY [LARGE SCALE ANALYSIS]</scope>
    <source>
        <tissue>Cervix carcinoma</tissue>
        <tissue>Erythroleukemia</tissue>
    </source>
</reference>
<reference key="7">
    <citation type="journal article" date="2014" name="J. Proteomics">
        <title>An enzyme assisted RP-RPLC approach for in-depth analysis of human liver phosphoproteome.</title>
        <authorList>
            <person name="Bian Y."/>
            <person name="Song C."/>
            <person name="Cheng K."/>
            <person name="Dong M."/>
            <person name="Wang F."/>
            <person name="Huang J."/>
            <person name="Sun D."/>
            <person name="Wang L."/>
            <person name="Ye M."/>
            <person name="Zou H."/>
        </authorList>
    </citation>
    <scope>IDENTIFICATION BY MASS SPECTROMETRY [LARGE SCALE ANALYSIS]</scope>
    <source>
        <tissue>Liver</tissue>
    </source>
</reference>
<reference key="8">
    <citation type="journal article" date="2007" name="Nature">
        <title>Patterns of somatic mutation in human cancer genomes.</title>
        <authorList>
            <person name="Greenman C."/>
            <person name="Stephens P."/>
            <person name="Smith R."/>
            <person name="Dalgliesh G.L."/>
            <person name="Hunter C."/>
            <person name="Bignell G."/>
            <person name="Davies H."/>
            <person name="Teague J."/>
            <person name="Butler A."/>
            <person name="Stevens C."/>
            <person name="Edkins S."/>
            <person name="O'Meara S."/>
            <person name="Vastrik I."/>
            <person name="Schmidt E.E."/>
            <person name="Avis T."/>
            <person name="Barthorpe S."/>
            <person name="Bhamra G."/>
            <person name="Buck G."/>
            <person name="Choudhury B."/>
            <person name="Clements J."/>
            <person name="Cole J."/>
            <person name="Dicks E."/>
            <person name="Forbes S."/>
            <person name="Gray K."/>
            <person name="Halliday K."/>
            <person name="Harrison R."/>
            <person name="Hills K."/>
            <person name="Hinton J."/>
            <person name="Jenkinson A."/>
            <person name="Jones D."/>
            <person name="Menzies A."/>
            <person name="Mironenko T."/>
            <person name="Perry J."/>
            <person name="Raine K."/>
            <person name="Richardson D."/>
            <person name="Shepherd R."/>
            <person name="Small A."/>
            <person name="Tofts C."/>
            <person name="Varian J."/>
            <person name="Webb T."/>
            <person name="West S."/>
            <person name="Widaa S."/>
            <person name="Yates A."/>
            <person name="Cahill D.P."/>
            <person name="Louis D.N."/>
            <person name="Goldstraw P."/>
            <person name="Nicholson A.G."/>
            <person name="Brasseur F."/>
            <person name="Looijenga L."/>
            <person name="Weber B.L."/>
            <person name="Chiew Y.-E."/>
            <person name="DeFazio A."/>
            <person name="Greaves M.F."/>
            <person name="Green A.R."/>
            <person name="Campbell P."/>
            <person name="Birney E."/>
            <person name="Easton D.F."/>
            <person name="Chenevix-Trench G."/>
            <person name="Tan M.-H."/>
            <person name="Khoo S.K."/>
            <person name="Teh B.T."/>
            <person name="Yuen S.T."/>
            <person name="Leung S.Y."/>
            <person name="Wooster R."/>
            <person name="Futreal P.A."/>
            <person name="Stratton M.R."/>
        </authorList>
    </citation>
    <scope>VARIANTS [LARGE SCALE ANALYSIS] THR-334; LEU-407; VAL-446; GLN-552 AND MET-633</scope>
</reference>
<protein>
    <recommendedName>
        <fullName>Mitogen-activated protein kinase kinase kinase kinase 5</fullName>
        <ecNumber>2.7.11.1</ecNumber>
    </recommendedName>
    <alternativeName>
        <fullName>Kinase homologous to SPS1/STE20</fullName>
        <shortName>KHS</shortName>
    </alternativeName>
    <alternativeName>
        <fullName>MAPK/ERK kinase kinase kinase 5</fullName>
        <shortName>MEK kinase kinase 5</shortName>
        <shortName>MEKKK 5</shortName>
    </alternativeName>
</protein>
<proteinExistence type="evidence at protein level"/>
<comment type="function">
    <text evidence="6">May play a role in the response to environmental stress. Appears to act upstream of the JUN N-terminal pathway.</text>
</comment>
<comment type="catalytic activity">
    <reaction evidence="6">
        <text>L-seryl-[protein] + ATP = O-phospho-L-seryl-[protein] + ADP + H(+)</text>
        <dbReference type="Rhea" id="RHEA:17989"/>
        <dbReference type="Rhea" id="RHEA-COMP:9863"/>
        <dbReference type="Rhea" id="RHEA-COMP:11604"/>
        <dbReference type="ChEBI" id="CHEBI:15378"/>
        <dbReference type="ChEBI" id="CHEBI:29999"/>
        <dbReference type="ChEBI" id="CHEBI:30616"/>
        <dbReference type="ChEBI" id="CHEBI:83421"/>
        <dbReference type="ChEBI" id="CHEBI:456216"/>
        <dbReference type="EC" id="2.7.11.1"/>
    </reaction>
</comment>
<comment type="catalytic activity">
    <reaction evidence="6">
        <text>L-threonyl-[protein] + ATP = O-phospho-L-threonyl-[protein] + ADP + H(+)</text>
        <dbReference type="Rhea" id="RHEA:46608"/>
        <dbReference type="Rhea" id="RHEA-COMP:11060"/>
        <dbReference type="Rhea" id="RHEA-COMP:11605"/>
        <dbReference type="ChEBI" id="CHEBI:15378"/>
        <dbReference type="ChEBI" id="CHEBI:30013"/>
        <dbReference type="ChEBI" id="CHEBI:30616"/>
        <dbReference type="ChEBI" id="CHEBI:61977"/>
        <dbReference type="ChEBI" id="CHEBI:456216"/>
        <dbReference type="EC" id="2.7.11.1"/>
    </reaction>
</comment>
<comment type="cofactor">
    <cofactor evidence="6">
        <name>Mg(2+)</name>
        <dbReference type="ChEBI" id="CHEBI:18420"/>
    </cofactor>
</comment>
<comment type="subunit">
    <text evidence="7">Interacts with both SH3 domains of the adapter proteins CRK and CRKL.</text>
</comment>
<comment type="interaction">
    <interactant intactId="EBI-1279">
        <id>Q9Y4K4</id>
    </interactant>
    <interactant intactId="EBI-886">
        <id>P46108</id>
        <label>CRK</label>
    </interactant>
    <organismsDiffer>false</organismsDiffer>
    <experiments>5</experiments>
</comment>
<comment type="interaction">
    <interactant intactId="EBI-1279">
        <id>Q9Y4K4</id>
    </interactant>
    <interactant intactId="EBI-401755">
        <id>P62993</id>
        <label>GRB2</label>
    </interactant>
    <organismsDiffer>false</organismsDiffer>
    <experiments>7</experiments>
</comment>
<comment type="interaction">
    <interactant intactId="EBI-1279">
        <id>Q9Y4K4</id>
    </interactant>
    <interactant intactId="EBI-1758170">
        <id>Q8IVH8</id>
        <label>MAP4K3</label>
    </interactant>
    <organismsDiffer>false</organismsDiffer>
    <experiments>2</experiments>
</comment>
<comment type="interaction">
    <interactant intactId="EBI-1279">
        <id>Q9Y4K4</id>
    </interactant>
    <interactant intactId="EBI-389883">
        <id>P16333</id>
        <label>NCK1</label>
    </interactant>
    <organismsDiffer>false</organismsDiffer>
    <experiments>2</experiments>
</comment>
<comment type="subcellular location">
    <subcellularLocation>
        <location evidence="6">Cytoplasm</location>
    </subcellularLocation>
</comment>
<comment type="tissue specificity">
    <text evidence="6">Ubiquitously expressed in all tissues examined, with high levels in the ovary, testis and prostate.</text>
</comment>
<comment type="similarity">
    <text evidence="8">Belongs to the protein kinase superfamily. STE Ser/Thr protein kinase family. STE20 subfamily.</text>
</comment>